<proteinExistence type="inferred from homology"/>
<feature type="chain" id="PRO_1000114155" description="Porphobilinogen deaminase">
    <location>
        <begin position="1"/>
        <end position="321"/>
    </location>
</feature>
<feature type="modified residue" description="S-(dipyrrolylmethanemethyl)cysteine" evidence="1">
    <location>
        <position position="243"/>
    </location>
</feature>
<protein>
    <recommendedName>
        <fullName evidence="1">Porphobilinogen deaminase</fullName>
        <shortName evidence="1">PBG</shortName>
        <ecNumber evidence="1">2.5.1.61</ecNumber>
    </recommendedName>
    <alternativeName>
        <fullName evidence="1">Hydroxymethylbilane synthase</fullName>
        <shortName evidence="1">HMBS</shortName>
    </alternativeName>
    <alternativeName>
        <fullName evidence="1">Pre-uroporphyrinogen synthase</fullName>
    </alternativeName>
</protein>
<name>HEM3_HISS2</name>
<sequence length="321" mass="35317">MSINKTLKIATRQSPLALWQANYVKNRLQQRYSHLSVELVPIITKGDVILDTPLAKIGGKGLFVKELENALLNGEADIAVHSMKDVPMQFPKGLELSVICPREDPRDAFVSNKYRTLDELPQGAIVGTSSLRRQCQLKNWRADLDIRSLRGNVGTRLNKLDQGDYDAIILASAGLIRLGLTERIRSFIEIDTILPACGQGAVGIECRVDDRDVQSLLMPLADQTTTYCVLAERAMNFHLQGGCQVPIGAYAILENNQLYLRGLVGDVHGSQILSAEGQFELSLDFESSQSAVQKAEELGVSIAEQLLQQGADKILQAVYQS</sequence>
<evidence type="ECO:0000255" key="1">
    <source>
        <dbReference type="HAMAP-Rule" id="MF_00260"/>
    </source>
</evidence>
<accession>B0UWZ8</accession>
<dbReference type="EC" id="2.5.1.61" evidence="1"/>
<dbReference type="EMBL" id="CP000947">
    <property type="protein sequence ID" value="ACA31729.1"/>
    <property type="molecule type" value="Genomic_DNA"/>
</dbReference>
<dbReference type="RefSeq" id="WP_011608203.1">
    <property type="nucleotide sequence ID" value="NC_010519.1"/>
</dbReference>
<dbReference type="SMR" id="B0UWZ8"/>
<dbReference type="STRING" id="228400.HSM_1937"/>
<dbReference type="GeneID" id="31488248"/>
<dbReference type="KEGG" id="hsm:HSM_1937"/>
<dbReference type="HOGENOM" id="CLU_019704_0_2_6"/>
<dbReference type="UniPathway" id="UPA00251">
    <property type="reaction ID" value="UER00319"/>
</dbReference>
<dbReference type="GO" id="GO:0005737">
    <property type="term" value="C:cytoplasm"/>
    <property type="evidence" value="ECO:0007669"/>
    <property type="project" value="TreeGrafter"/>
</dbReference>
<dbReference type="GO" id="GO:0004418">
    <property type="term" value="F:hydroxymethylbilane synthase activity"/>
    <property type="evidence" value="ECO:0007669"/>
    <property type="project" value="UniProtKB-UniRule"/>
</dbReference>
<dbReference type="GO" id="GO:0006782">
    <property type="term" value="P:protoporphyrinogen IX biosynthetic process"/>
    <property type="evidence" value="ECO:0007669"/>
    <property type="project" value="UniProtKB-UniRule"/>
</dbReference>
<dbReference type="CDD" id="cd13646">
    <property type="entry name" value="PBP2_EcHMBS_like"/>
    <property type="match status" value="1"/>
</dbReference>
<dbReference type="FunFam" id="3.30.160.40:FF:000002">
    <property type="entry name" value="Porphobilinogen deaminase"/>
    <property type="match status" value="1"/>
</dbReference>
<dbReference type="FunFam" id="3.40.190.10:FF:000004">
    <property type="entry name" value="Porphobilinogen deaminase"/>
    <property type="match status" value="1"/>
</dbReference>
<dbReference type="FunFam" id="3.40.190.10:FF:000005">
    <property type="entry name" value="Porphobilinogen deaminase"/>
    <property type="match status" value="1"/>
</dbReference>
<dbReference type="Gene3D" id="3.40.190.10">
    <property type="entry name" value="Periplasmic binding protein-like II"/>
    <property type="match status" value="2"/>
</dbReference>
<dbReference type="Gene3D" id="3.30.160.40">
    <property type="entry name" value="Porphobilinogen deaminase, C-terminal domain"/>
    <property type="match status" value="1"/>
</dbReference>
<dbReference type="HAMAP" id="MF_00260">
    <property type="entry name" value="Porphobil_deam"/>
    <property type="match status" value="1"/>
</dbReference>
<dbReference type="InterPro" id="IPR000860">
    <property type="entry name" value="HemC"/>
</dbReference>
<dbReference type="InterPro" id="IPR022419">
    <property type="entry name" value="Porphobilin_deaminase_cofac_BS"/>
</dbReference>
<dbReference type="InterPro" id="IPR022417">
    <property type="entry name" value="Porphobilin_deaminase_N"/>
</dbReference>
<dbReference type="InterPro" id="IPR022418">
    <property type="entry name" value="Porphobilinogen_deaminase_C"/>
</dbReference>
<dbReference type="InterPro" id="IPR036803">
    <property type="entry name" value="Porphobilinogen_deaminase_C_sf"/>
</dbReference>
<dbReference type="NCBIfam" id="TIGR00212">
    <property type="entry name" value="hemC"/>
    <property type="match status" value="1"/>
</dbReference>
<dbReference type="PANTHER" id="PTHR11557">
    <property type="entry name" value="PORPHOBILINOGEN DEAMINASE"/>
    <property type="match status" value="1"/>
</dbReference>
<dbReference type="PANTHER" id="PTHR11557:SF0">
    <property type="entry name" value="PORPHOBILINOGEN DEAMINASE"/>
    <property type="match status" value="1"/>
</dbReference>
<dbReference type="Pfam" id="PF01379">
    <property type="entry name" value="Porphobil_deam"/>
    <property type="match status" value="1"/>
</dbReference>
<dbReference type="Pfam" id="PF03900">
    <property type="entry name" value="Porphobil_deamC"/>
    <property type="match status" value="1"/>
</dbReference>
<dbReference type="PIRSF" id="PIRSF001438">
    <property type="entry name" value="4pyrrol_synth_OHMeBilane_synth"/>
    <property type="match status" value="1"/>
</dbReference>
<dbReference type="PRINTS" id="PR00151">
    <property type="entry name" value="PORPHBDMNASE"/>
</dbReference>
<dbReference type="SUPFAM" id="SSF53850">
    <property type="entry name" value="Periplasmic binding protein-like II"/>
    <property type="match status" value="1"/>
</dbReference>
<dbReference type="SUPFAM" id="SSF54782">
    <property type="entry name" value="Porphobilinogen deaminase (hydroxymethylbilane synthase), C-terminal domain"/>
    <property type="match status" value="1"/>
</dbReference>
<dbReference type="PROSITE" id="PS00533">
    <property type="entry name" value="PORPHOBILINOGEN_DEAM"/>
    <property type="match status" value="1"/>
</dbReference>
<comment type="function">
    <text evidence="1">Tetrapolymerization of the monopyrrole PBG into the hydroxymethylbilane pre-uroporphyrinogen in several discrete steps.</text>
</comment>
<comment type="catalytic activity">
    <reaction evidence="1">
        <text>4 porphobilinogen + H2O = hydroxymethylbilane + 4 NH4(+)</text>
        <dbReference type="Rhea" id="RHEA:13185"/>
        <dbReference type="ChEBI" id="CHEBI:15377"/>
        <dbReference type="ChEBI" id="CHEBI:28938"/>
        <dbReference type="ChEBI" id="CHEBI:57845"/>
        <dbReference type="ChEBI" id="CHEBI:58126"/>
        <dbReference type="EC" id="2.5.1.61"/>
    </reaction>
</comment>
<comment type="cofactor">
    <cofactor evidence="1">
        <name>dipyrromethane</name>
        <dbReference type="ChEBI" id="CHEBI:60342"/>
    </cofactor>
    <text evidence="1">Binds 1 dipyrromethane group covalently.</text>
</comment>
<comment type="pathway">
    <text evidence="1">Porphyrin-containing compound metabolism; protoporphyrin-IX biosynthesis; coproporphyrinogen-III from 5-aminolevulinate: step 2/4.</text>
</comment>
<comment type="subunit">
    <text evidence="1">Monomer.</text>
</comment>
<comment type="miscellaneous">
    <text evidence="1">The porphobilinogen subunits are added to the dipyrromethane group.</text>
</comment>
<comment type="similarity">
    <text evidence="1">Belongs to the HMBS family.</text>
</comment>
<keyword id="KW-0627">Porphyrin biosynthesis</keyword>
<keyword id="KW-0808">Transferase</keyword>
<gene>
    <name evidence="1" type="primary">hemC</name>
    <name type="ordered locus">HSM_1937</name>
</gene>
<organism>
    <name type="scientific">Histophilus somni (strain 2336)</name>
    <name type="common">Haemophilus somnus</name>
    <dbReference type="NCBI Taxonomy" id="228400"/>
    <lineage>
        <taxon>Bacteria</taxon>
        <taxon>Pseudomonadati</taxon>
        <taxon>Pseudomonadota</taxon>
        <taxon>Gammaproteobacteria</taxon>
        <taxon>Pasteurellales</taxon>
        <taxon>Pasteurellaceae</taxon>
        <taxon>Histophilus</taxon>
    </lineage>
</organism>
<reference key="1">
    <citation type="submission" date="2008-02" db="EMBL/GenBank/DDBJ databases">
        <title>Complete sequence of Haemophilus somnus 2336.</title>
        <authorList>
            <consortium name="US DOE Joint Genome Institute"/>
            <person name="Siddaramappa S."/>
            <person name="Duncan A.J."/>
            <person name="Challacombe J.F."/>
            <person name="Rainey D."/>
            <person name="Gillaspy A.F."/>
            <person name="Carson M."/>
            <person name="Gipson J."/>
            <person name="Gipson M."/>
            <person name="Bruce D."/>
            <person name="Detter J.C."/>
            <person name="Han C.S."/>
            <person name="Land M."/>
            <person name="Tapia R."/>
            <person name="Thompson L.S."/>
            <person name="Orvis J."/>
            <person name="Zaitshik J."/>
            <person name="Barnes G."/>
            <person name="Brettin T.S."/>
            <person name="Dyer D.W."/>
            <person name="Inzana T.J."/>
        </authorList>
    </citation>
    <scope>NUCLEOTIDE SEQUENCE [LARGE SCALE GENOMIC DNA]</scope>
    <source>
        <strain>2336</strain>
    </source>
</reference>